<organism>
    <name type="scientific">Micronycteris homezi</name>
    <name type="common">Big-eared bat</name>
    <dbReference type="NCBI Taxonomy" id="249007"/>
    <lineage>
        <taxon>Eukaryota</taxon>
        <taxon>Metazoa</taxon>
        <taxon>Chordata</taxon>
        <taxon>Craniata</taxon>
        <taxon>Vertebrata</taxon>
        <taxon>Euteleostomi</taxon>
        <taxon>Mammalia</taxon>
        <taxon>Eutheria</taxon>
        <taxon>Laurasiatheria</taxon>
        <taxon>Chiroptera</taxon>
        <taxon>Yangochiroptera</taxon>
        <taxon>Phyllostomidae</taxon>
        <taxon>Phyllostominae</taxon>
        <taxon>Micronycteris</taxon>
    </lineage>
</organism>
<dbReference type="EMBL" id="AY380754">
    <property type="protein sequence ID" value="AAR91767.1"/>
    <property type="molecule type" value="Genomic_DNA"/>
</dbReference>
<dbReference type="SMR" id="Q597E2"/>
<dbReference type="GO" id="GO:0005743">
    <property type="term" value="C:mitochondrial inner membrane"/>
    <property type="evidence" value="ECO:0007669"/>
    <property type="project" value="UniProtKB-SubCell"/>
</dbReference>
<dbReference type="GO" id="GO:0045275">
    <property type="term" value="C:respiratory chain complex III"/>
    <property type="evidence" value="ECO:0007669"/>
    <property type="project" value="InterPro"/>
</dbReference>
<dbReference type="GO" id="GO:0046872">
    <property type="term" value="F:metal ion binding"/>
    <property type="evidence" value="ECO:0007669"/>
    <property type="project" value="UniProtKB-KW"/>
</dbReference>
<dbReference type="GO" id="GO:0008121">
    <property type="term" value="F:ubiquinol-cytochrome-c reductase activity"/>
    <property type="evidence" value="ECO:0007669"/>
    <property type="project" value="InterPro"/>
</dbReference>
<dbReference type="GO" id="GO:0006122">
    <property type="term" value="P:mitochondrial electron transport, ubiquinol to cytochrome c"/>
    <property type="evidence" value="ECO:0007669"/>
    <property type="project" value="TreeGrafter"/>
</dbReference>
<dbReference type="CDD" id="cd00290">
    <property type="entry name" value="cytochrome_b_C"/>
    <property type="match status" value="1"/>
</dbReference>
<dbReference type="CDD" id="cd00284">
    <property type="entry name" value="Cytochrome_b_N"/>
    <property type="match status" value="1"/>
</dbReference>
<dbReference type="FunFam" id="1.20.810.10:FF:000002">
    <property type="entry name" value="Cytochrome b"/>
    <property type="match status" value="1"/>
</dbReference>
<dbReference type="Gene3D" id="1.20.810.10">
    <property type="entry name" value="Cytochrome Bc1 Complex, Chain C"/>
    <property type="match status" value="1"/>
</dbReference>
<dbReference type="InterPro" id="IPR005798">
    <property type="entry name" value="Cyt_b/b6_C"/>
</dbReference>
<dbReference type="InterPro" id="IPR036150">
    <property type="entry name" value="Cyt_b/b6_C_sf"/>
</dbReference>
<dbReference type="InterPro" id="IPR005797">
    <property type="entry name" value="Cyt_b/b6_N"/>
</dbReference>
<dbReference type="InterPro" id="IPR027387">
    <property type="entry name" value="Cytb/b6-like_sf"/>
</dbReference>
<dbReference type="InterPro" id="IPR030689">
    <property type="entry name" value="Cytochrome_b"/>
</dbReference>
<dbReference type="InterPro" id="IPR048260">
    <property type="entry name" value="Cytochrome_b_C_euk/bac"/>
</dbReference>
<dbReference type="InterPro" id="IPR048259">
    <property type="entry name" value="Cytochrome_b_N_euk/bac"/>
</dbReference>
<dbReference type="InterPro" id="IPR016174">
    <property type="entry name" value="Di-haem_cyt_TM"/>
</dbReference>
<dbReference type="PANTHER" id="PTHR19271">
    <property type="entry name" value="CYTOCHROME B"/>
    <property type="match status" value="1"/>
</dbReference>
<dbReference type="PANTHER" id="PTHR19271:SF16">
    <property type="entry name" value="CYTOCHROME B"/>
    <property type="match status" value="1"/>
</dbReference>
<dbReference type="Pfam" id="PF00032">
    <property type="entry name" value="Cytochrom_B_C"/>
    <property type="match status" value="1"/>
</dbReference>
<dbReference type="Pfam" id="PF00033">
    <property type="entry name" value="Cytochrome_B"/>
    <property type="match status" value="1"/>
</dbReference>
<dbReference type="PIRSF" id="PIRSF038885">
    <property type="entry name" value="COB"/>
    <property type="match status" value="1"/>
</dbReference>
<dbReference type="SUPFAM" id="SSF81648">
    <property type="entry name" value="a domain/subunit of cytochrome bc1 complex (Ubiquinol-cytochrome c reductase)"/>
    <property type="match status" value="1"/>
</dbReference>
<dbReference type="SUPFAM" id="SSF81342">
    <property type="entry name" value="Transmembrane di-heme cytochromes"/>
    <property type="match status" value="1"/>
</dbReference>
<dbReference type="PROSITE" id="PS51003">
    <property type="entry name" value="CYTB_CTER"/>
    <property type="match status" value="1"/>
</dbReference>
<dbReference type="PROSITE" id="PS51002">
    <property type="entry name" value="CYTB_NTER"/>
    <property type="match status" value="1"/>
</dbReference>
<evidence type="ECO:0000250" key="1"/>
<evidence type="ECO:0000250" key="2">
    <source>
        <dbReference type="UniProtKB" id="P00157"/>
    </source>
</evidence>
<evidence type="ECO:0000255" key="3">
    <source>
        <dbReference type="PROSITE-ProRule" id="PRU00967"/>
    </source>
</evidence>
<evidence type="ECO:0000255" key="4">
    <source>
        <dbReference type="PROSITE-ProRule" id="PRU00968"/>
    </source>
</evidence>
<proteinExistence type="inferred from homology"/>
<keyword id="KW-0249">Electron transport</keyword>
<keyword id="KW-0349">Heme</keyword>
<keyword id="KW-0408">Iron</keyword>
<keyword id="KW-0472">Membrane</keyword>
<keyword id="KW-0479">Metal-binding</keyword>
<keyword id="KW-0496">Mitochondrion</keyword>
<keyword id="KW-0999">Mitochondrion inner membrane</keyword>
<keyword id="KW-0679">Respiratory chain</keyword>
<keyword id="KW-0812">Transmembrane</keyword>
<keyword id="KW-1133">Transmembrane helix</keyword>
<keyword id="KW-0813">Transport</keyword>
<keyword id="KW-0830">Ubiquinone</keyword>
<name>CYB_MICHO</name>
<sequence length="379" mass="42559">MTNIRKSHPLLKILNSSLVDLPAPSSLTSWWNFGSLLGICLAAQILTGLFLAMHYTSDTATAFNSVTHICRDVNYGWILRYLHANGASMFFICLYLHVGRGLYYGSYTYTETWNIGIILLFAVMATAFMGYVLPWGQMSFWGATVITNLLSAIPYIGTDLVQWIWGGFSVDKATLTRFFAFHFLLPFIISALVMVHLLFLHETGSNNPMGIPSDLDMIPFHPYYTIKDILGLLIMLTALSTLVLFSPDLLGDPDNYTPANPLNTPPHIKPEWYFLFAYAILRSIPNKLGGVLALVLSILVLAIVPMLHTSKQQSMMFRPLSQCLFWLLVADLFTLTWIGGQPVEHPYVIIGQVASILYFSIILVLMPLIGIMENHLLKW</sequence>
<reference key="1">
    <citation type="submission" date="2003-09" db="EMBL/GenBank/DDBJ databases">
        <title>Molecular evidence for unrecognized biodiversity in the bat genus Micronycteris (Phyllostomidae), with descriptions of two new subgenera.</title>
        <authorList>
            <person name="Porter C.A."/>
            <person name="Hoofer S.R."/>
            <person name="Cline C.A."/>
            <person name="Hoffmann F.G."/>
            <person name="Baker R.J."/>
        </authorList>
    </citation>
    <scope>NUCLEOTIDE SEQUENCE [GENOMIC DNA]</scope>
</reference>
<geneLocation type="mitochondrion"/>
<gene>
    <name type="primary">MT-CYB</name>
    <name type="synonym">COB</name>
    <name type="synonym">CYTB</name>
    <name type="synonym">MTCYB</name>
</gene>
<protein>
    <recommendedName>
        <fullName>Cytochrome b</fullName>
    </recommendedName>
    <alternativeName>
        <fullName>Complex III subunit 3</fullName>
    </alternativeName>
    <alternativeName>
        <fullName>Complex III subunit III</fullName>
    </alternativeName>
    <alternativeName>
        <fullName>Cytochrome b-c1 complex subunit 3</fullName>
    </alternativeName>
    <alternativeName>
        <fullName>Ubiquinol-cytochrome-c reductase complex cytochrome b subunit</fullName>
    </alternativeName>
</protein>
<accession>Q597E2</accession>
<feature type="chain" id="PRO_0000254714" description="Cytochrome b">
    <location>
        <begin position="1"/>
        <end position="379"/>
    </location>
</feature>
<feature type="transmembrane region" description="Helical" evidence="2">
    <location>
        <begin position="33"/>
        <end position="53"/>
    </location>
</feature>
<feature type="transmembrane region" description="Helical" evidence="2">
    <location>
        <begin position="77"/>
        <end position="98"/>
    </location>
</feature>
<feature type="transmembrane region" description="Helical" evidence="2">
    <location>
        <begin position="113"/>
        <end position="133"/>
    </location>
</feature>
<feature type="transmembrane region" description="Helical" evidence="2">
    <location>
        <begin position="178"/>
        <end position="198"/>
    </location>
</feature>
<feature type="transmembrane region" description="Helical" evidence="2">
    <location>
        <begin position="226"/>
        <end position="246"/>
    </location>
</feature>
<feature type="transmembrane region" description="Helical" evidence="2">
    <location>
        <begin position="288"/>
        <end position="308"/>
    </location>
</feature>
<feature type="transmembrane region" description="Helical" evidence="2">
    <location>
        <begin position="320"/>
        <end position="340"/>
    </location>
</feature>
<feature type="transmembrane region" description="Helical" evidence="2">
    <location>
        <begin position="347"/>
        <end position="367"/>
    </location>
</feature>
<feature type="binding site" description="axial binding residue" evidence="2">
    <location>
        <position position="83"/>
    </location>
    <ligand>
        <name>heme b</name>
        <dbReference type="ChEBI" id="CHEBI:60344"/>
        <label>b562</label>
    </ligand>
    <ligandPart>
        <name>Fe</name>
        <dbReference type="ChEBI" id="CHEBI:18248"/>
    </ligandPart>
</feature>
<feature type="binding site" description="axial binding residue" evidence="2">
    <location>
        <position position="97"/>
    </location>
    <ligand>
        <name>heme b</name>
        <dbReference type="ChEBI" id="CHEBI:60344"/>
        <label>b566</label>
    </ligand>
    <ligandPart>
        <name>Fe</name>
        <dbReference type="ChEBI" id="CHEBI:18248"/>
    </ligandPart>
</feature>
<feature type="binding site" description="axial binding residue" evidence="2">
    <location>
        <position position="182"/>
    </location>
    <ligand>
        <name>heme b</name>
        <dbReference type="ChEBI" id="CHEBI:60344"/>
        <label>b562</label>
    </ligand>
    <ligandPart>
        <name>Fe</name>
        <dbReference type="ChEBI" id="CHEBI:18248"/>
    </ligandPart>
</feature>
<feature type="binding site" description="axial binding residue" evidence="2">
    <location>
        <position position="196"/>
    </location>
    <ligand>
        <name>heme b</name>
        <dbReference type="ChEBI" id="CHEBI:60344"/>
        <label>b566</label>
    </ligand>
    <ligandPart>
        <name>Fe</name>
        <dbReference type="ChEBI" id="CHEBI:18248"/>
    </ligandPart>
</feature>
<feature type="binding site" evidence="2">
    <location>
        <position position="201"/>
    </location>
    <ligand>
        <name>a ubiquinone</name>
        <dbReference type="ChEBI" id="CHEBI:16389"/>
    </ligand>
</feature>
<comment type="function">
    <text evidence="2">Component of the ubiquinol-cytochrome c reductase complex (complex III or cytochrome b-c1 complex) that is part of the mitochondrial respiratory chain. The b-c1 complex mediates electron transfer from ubiquinol to cytochrome c. Contributes to the generation of a proton gradient across the mitochondrial membrane that is then used for ATP synthesis.</text>
</comment>
<comment type="cofactor">
    <cofactor evidence="2">
        <name>heme b</name>
        <dbReference type="ChEBI" id="CHEBI:60344"/>
    </cofactor>
    <text evidence="2">Binds 2 heme b groups non-covalently.</text>
</comment>
<comment type="subunit">
    <text evidence="2">The cytochrome bc1 complex contains 11 subunits: 3 respiratory subunits (MT-CYB, CYC1 and UQCRFS1), 2 core proteins (UQCRC1 and UQCRC2) and 6 low-molecular weight proteins (UQCRH/QCR6, UQCRB/QCR7, UQCRQ/QCR8, UQCR10/QCR9, UQCR11/QCR10 and a cleavage product of UQCRFS1). This cytochrome bc1 complex then forms a dimer.</text>
</comment>
<comment type="subcellular location">
    <subcellularLocation>
        <location evidence="2">Mitochondrion inner membrane</location>
        <topology evidence="2">Multi-pass membrane protein</topology>
    </subcellularLocation>
</comment>
<comment type="miscellaneous">
    <text evidence="1">Heme 1 (or BL or b562) is low-potential and absorbs at about 562 nm, and heme 2 (or BH or b566) is high-potential and absorbs at about 566 nm.</text>
</comment>
<comment type="similarity">
    <text evidence="3 4">Belongs to the cytochrome b family.</text>
</comment>
<comment type="caution">
    <text evidence="2">The full-length protein contains only eight transmembrane helices, not nine as predicted by bioinformatics tools.</text>
</comment>